<organism>
    <name type="scientific">Staphylococcus aureus (strain MRSA252)</name>
    <dbReference type="NCBI Taxonomy" id="282458"/>
    <lineage>
        <taxon>Bacteria</taxon>
        <taxon>Bacillati</taxon>
        <taxon>Bacillota</taxon>
        <taxon>Bacilli</taxon>
        <taxon>Bacillales</taxon>
        <taxon>Staphylococcaceae</taxon>
        <taxon>Staphylococcus</taxon>
    </lineage>
</organism>
<accession>Q6GEI5</accession>
<feature type="chain" id="PRO_0000224173" description="Large ribosomal subunit protein uL23">
    <location>
        <begin position="1"/>
        <end position="91"/>
    </location>
</feature>
<keyword id="KW-0687">Ribonucleoprotein</keyword>
<keyword id="KW-0689">Ribosomal protein</keyword>
<keyword id="KW-0694">RNA-binding</keyword>
<keyword id="KW-0699">rRNA-binding</keyword>
<proteinExistence type="inferred from homology"/>
<gene>
    <name evidence="1" type="primary">rplW</name>
    <name type="ordered locus">SAR2333</name>
</gene>
<comment type="function">
    <text evidence="1">One of the early assembly proteins it binds 23S rRNA. One of the proteins that surrounds the polypeptide exit tunnel on the outside of the ribosome. Forms the main docking site for trigger factor binding to the ribosome.</text>
</comment>
<comment type="subunit">
    <text evidence="1">Part of the 50S ribosomal subunit. Contacts protein L29, and trigger factor when it is bound to the ribosome.</text>
</comment>
<comment type="similarity">
    <text evidence="1">Belongs to the universal ribosomal protein uL23 family.</text>
</comment>
<reference key="1">
    <citation type="journal article" date="2004" name="Proc. Natl. Acad. Sci. U.S.A.">
        <title>Complete genomes of two clinical Staphylococcus aureus strains: evidence for the rapid evolution of virulence and drug resistance.</title>
        <authorList>
            <person name="Holden M.T.G."/>
            <person name="Feil E.J."/>
            <person name="Lindsay J.A."/>
            <person name="Peacock S.J."/>
            <person name="Day N.P.J."/>
            <person name="Enright M.C."/>
            <person name="Foster T.J."/>
            <person name="Moore C.E."/>
            <person name="Hurst L."/>
            <person name="Atkin R."/>
            <person name="Barron A."/>
            <person name="Bason N."/>
            <person name="Bentley S.D."/>
            <person name="Chillingworth C."/>
            <person name="Chillingworth T."/>
            <person name="Churcher C."/>
            <person name="Clark L."/>
            <person name="Corton C."/>
            <person name="Cronin A."/>
            <person name="Doggett J."/>
            <person name="Dowd L."/>
            <person name="Feltwell T."/>
            <person name="Hance Z."/>
            <person name="Harris B."/>
            <person name="Hauser H."/>
            <person name="Holroyd S."/>
            <person name="Jagels K."/>
            <person name="James K.D."/>
            <person name="Lennard N."/>
            <person name="Line A."/>
            <person name="Mayes R."/>
            <person name="Moule S."/>
            <person name="Mungall K."/>
            <person name="Ormond D."/>
            <person name="Quail M.A."/>
            <person name="Rabbinowitsch E."/>
            <person name="Rutherford K.M."/>
            <person name="Sanders M."/>
            <person name="Sharp S."/>
            <person name="Simmonds M."/>
            <person name="Stevens K."/>
            <person name="Whitehead S."/>
            <person name="Barrell B.G."/>
            <person name="Spratt B.G."/>
            <person name="Parkhill J."/>
        </authorList>
    </citation>
    <scope>NUCLEOTIDE SEQUENCE [LARGE SCALE GENOMIC DNA]</scope>
    <source>
        <strain>MRSA252</strain>
    </source>
</reference>
<sequence length="91" mass="10605">MEARDILKRPVITEKSSEAMAEDKYTFDVDTRVNKTQVKMAVEEIFNVKVASVNIMNYKPKKKRMGRYQGYTNKRRKAIVTLKEGSIDLFN</sequence>
<name>RL23_STAAR</name>
<evidence type="ECO:0000255" key="1">
    <source>
        <dbReference type="HAMAP-Rule" id="MF_01369"/>
    </source>
</evidence>
<evidence type="ECO:0000305" key="2"/>
<dbReference type="EMBL" id="BX571856">
    <property type="protein sequence ID" value="CAG41314.1"/>
    <property type="molecule type" value="Genomic_DNA"/>
</dbReference>
<dbReference type="RefSeq" id="WP_000388082.1">
    <property type="nucleotide sequence ID" value="NC_002952.2"/>
</dbReference>
<dbReference type="SMR" id="Q6GEI5"/>
<dbReference type="KEGG" id="sar:SAR2333"/>
<dbReference type="HOGENOM" id="CLU_037562_3_2_9"/>
<dbReference type="Proteomes" id="UP000000596">
    <property type="component" value="Chromosome"/>
</dbReference>
<dbReference type="GO" id="GO:1990904">
    <property type="term" value="C:ribonucleoprotein complex"/>
    <property type="evidence" value="ECO:0007669"/>
    <property type="project" value="UniProtKB-KW"/>
</dbReference>
<dbReference type="GO" id="GO:0005840">
    <property type="term" value="C:ribosome"/>
    <property type="evidence" value="ECO:0007669"/>
    <property type="project" value="UniProtKB-KW"/>
</dbReference>
<dbReference type="GO" id="GO:0019843">
    <property type="term" value="F:rRNA binding"/>
    <property type="evidence" value="ECO:0007669"/>
    <property type="project" value="UniProtKB-UniRule"/>
</dbReference>
<dbReference type="GO" id="GO:0003735">
    <property type="term" value="F:structural constituent of ribosome"/>
    <property type="evidence" value="ECO:0007669"/>
    <property type="project" value="InterPro"/>
</dbReference>
<dbReference type="GO" id="GO:0006412">
    <property type="term" value="P:translation"/>
    <property type="evidence" value="ECO:0007669"/>
    <property type="project" value="UniProtKB-UniRule"/>
</dbReference>
<dbReference type="FunFam" id="3.30.70.330:FF:000001">
    <property type="entry name" value="50S ribosomal protein L23"/>
    <property type="match status" value="1"/>
</dbReference>
<dbReference type="Gene3D" id="3.30.70.330">
    <property type="match status" value="1"/>
</dbReference>
<dbReference type="HAMAP" id="MF_01369_B">
    <property type="entry name" value="Ribosomal_uL23_B"/>
    <property type="match status" value="1"/>
</dbReference>
<dbReference type="InterPro" id="IPR012677">
    <property type="entry name" value="Nucleotide-bd_a/b_plait_sf"/>
</dbReference>
<dbReference type="InterPro" id="IPR013025">
    <property type="entry name" value="Ribosomal_uL23-like"/>
</dbReference>
<dbReference type="InterPro" id="IPR012678">
    <property type="entry name" value="Ribosomal_uL23/eL15/eS24_sf"/>
</dbReference>
<dbReference type="NCBIfam" id="NF004363">
    <property type="entry name" value="PRK05738.2-4"/>
    <property type="match status" value="1"/>
</dbReference>
<dbReference type="PANTHER" id="PTHR11620">
    <property type="entry name" value="60S RIBOSOMAL PROTEIN L23A"/>
    <property type="match status" value="1"/>
</dbReference>
<dbReference type="Pfam" id="PF00276">
    <property type="entry name" value="Ribosomal_L23"/>
    <property type="match status" value="1"/>
</dbReference>
<dbReference type="SUPFAM" id="SSF54189">
    <property type="entry name" value="Ribosomal proteins S24e, L23 and L15e"/>
    <property type="match status" value="1"/>
</dbReference>
<protein>
    <recommendedName>
        <fullName evidence="1">Large ribosomal subunit protein uL23</fullName>
    </recommendedName>
    <alternativeName>
        <fullName evidence="2">50S ribosomal protein L23</fullName>
    </alternativeName>
</protein>